<gene>
    <name evidence="1" type="primary">secA</name>
    <name type="ordered locus">BH3606</name>
</gene>
<comment type="function">
    <text evidence="1">Part of the Sec protein translocase complex. Interacts with the SecYEG preprotein conducting channel. Has a central role in coupling the hydrolysis of ATP to the transfer of proteins into and across the cell membrane, serving as an ATP-driven molecular motor driving the stepwise translocation of polypeptide chains across the membrane.</text>
</comment>
<comment type="catalytic activity">
    <reaction evidence="1">
        <text>ATP + H2O + cellular proteinSide 1 = ADP + phosphate + cellular proteinSide 2.</text>
        <dbReference type="EC" id="7.4.2.8"/>
    </reaction>
</comment>
<comment type="cofactor">
    <cofactor evidence="1">
        <name>Zn(2+)</name>
        <dbReference type="ChEBI" id="CHEBI:29105"/>
    </cofactor>
    <text evidence="1">May bind 1 zinc ion per subunit.</text>
</comment>
<comment type="subunit">
    <text evidence="1">Monomer and homodimer. Part of the essential Sec protein translocation apparatus which comprises SecA, SecYEG and auxiliary proteins SecDF. Other proteins may also be involved.</text>
</comment>
<comment type="subcellular location">
    <subcellularLocation>
        <location evidence="1">Cell membrane</location>
        <topology evidence="1">Peripheral membrane protein</topology>
        <orientation evidence="1">Cytoplasmic side</orientation>
    </subcellularLocation>
    <subcellularLocation>
        <location evidence="1">Cytoplasm</location>
    </subcellularLocation>
    <text evidence="1">Distribution is 50-50.</text>
</comment>
<comment type="similarity">
    <text evidence="1">Belongs to the SecA family.</text>
</comment>
<keyword id="KW-0067">ATP-binding</keyword>
<keyword id="KW-1003">Cell membrane</keyword>
<keyword id="KW-0963">Cytoplasm</keyword>
<keyword id="KW-0472">Membrane</keyword>
<keyword id="KW-0479">Metal-binding</keyword>
<keyword id="KW-0547">Nucleotide-binding</keyword>
<keyword id="KW-0653">Protein transport</keyword>
<keyword id="KW-1185">Reference proteome</keyword>
<keyword id="KW-1278">Translocase</keyword>
<keyword id="KW-0811">Translocation</keyword>
<keyword id="KW-0813">Transport</keyword>
<keyword id="KW-0862">Zinc</keyword>
<protein>
    <recommendedName>
        <fullName evidence="1">Protein translocase subunit SecA</fullName>
        <ecNumber evidence="1">7.4.2.8</ecNumber>
    </recommendedName>
</protein>
<organism>
    <name type="scientific">Halalkalibacterium halodurans (strain ATCC BAA-125 / DSM 18197 / FERM 7344 / JCM 9153 / C-125)</name>
    <name type="common">Bacillus halodurans</name>
    <dbReference type="NCBI Taxonomy" id="272558"/>
    <lineage>
        <taxon>Bacteria</taxon>
        <taxon>Bacillati</taxon>
        <taxon>Bacillota</taxon>
        <taxon>Bacilli</taxon>
        <taxon>Bacillales</taxon>
        <taxon>Bacillaceae</taxon>
        <taxon>Halalkalibacterium (ex Joshi et al. 2022)</taxon>
    </lineage>
</organism>
<accession>Q9K6W8</accession>
<feature type="chain" id="PRO_0000318317" description="Protein translocase subunit SecA">
    <location>
        <begin position="1"/>
        <end position="838"/>
    </location>
</feature>
<feature type="region of interest" description="Disordered" evidence="2">
    <location>
        <begin position="517"/>
        <end position="536"/>
    </location>
</feature>
<feature type="region of interest" description="Disordered" evidence="2">
    <location>
        <begin position="789"/>
        <end position="838"/>
    </location>
</feature>
<feature type="compositionally biased region" description="Basic and acidic residues" evidence="2">
    <location>
        <begin position="801"/>
        <end position="819"/>
    </location>
</feature>
<feature type="binding site" evidence="1">
    <location>
        <position position="86"/>
    </location>
    <ligand>
        <name>ATP</name>
        <dbReference type="ChEBI" id="CHEBI:30616"/>
    </ligand>
</feature>
<feature type="binding site" evidence="1">
    <location>
        <begin position="104"/>
        <end position="108"/>
    </location>
    <ligand>
        <name>ATP</name>
        <dbReference type="ChEBI" id="CHEBI:30616"/>
    </ligand>
</feature>
<feature type="binding site" evidence="1">
    <location>
        <position position="493"/>
    </location>
    <ligand>
        <name>ATP</name>
        <dbReference type="ChEBI" id="CHEBI:30616"/>
    </ligand>
</feature>
<feature type="binding site" evidence="1">
    <location>
        <position position="824"/>
    </location>
    <ligand>
        <name>Zn(2+)</name>
        <dbReference type="ChEBI" id="CHEBI:29105"/>
    </ligand>
</feature>
<feature type="binding site" evidence="1">
    <location>
        <position position="826"/>
    </location>
    <ligand>
        <name>Zn(2+)</name>
        <dbReference type="ChEBI" id="CHEBI:29105"/>
    </ligand>
</feature>
<feature type="binding site" evidence="1">
    <location>
        <position position="835"/>
    </location>
    <ligand>
        <name>Zn(2+)</name>
        <dbReference type="ChEBI" id="CHEBI:29105"/>
    </ligand>
</feature>
<feature type="binding site" evidence="1">
    <location>
        <position position="836"/>
    </location>
    <ligand>
        <name>Zn(2+)</name>
        <dbReference type="ChEBI" id="CHEBI:29105"/>
    </ligand>
</feature>
<sequence length="838" mass="95945">MLGLLKKVVGDPSQRQLKKNQKIADQVEALSDEMKSLSDDGLRQKTEEFKKRYKNGESLDDLLPEAYAVVREAATRVLNMTPYPVQILGAIALHQGNIAEMKTGEGKTLVGTMPVYLNALAGKGVHVVTVNDYLARRDSEQMGAMFEFLGLTVGLNVPGLSKEEKKEAYQADITYGTNNEFGFDYLRDNMVLYKEQMVQRSLNFALVDEVDSILIDEARTPLIISGSVERSTKLYSQANSFVRVLKNEEDYTLDEKTKSVQLTEEGVNKAERAFNIDNLFDQRHVQLLHHINQAMKAHVVMHRDADYVVENGEIVIVDQFTGRLMKGRRYSDGLHQAIEAKEGLQIQRESMTLASITFQNYFRMYQKLAGMTGTAKTEEEEFRNIYGMDVMVIPTNKPVIRDDRPDLIFKTMDAKFKAVVNEIEELYKKGQPVLVGTVSVETSELVSTLLKKRRIPHHVLNAKNHEKEAEIIENAGHRGAVTIATNMAGRGTDIKLGEGVRELGGLHVLGTERHESRRIDNQLRGRSGRQGDPGSSQFYLSMEDELMRRFGSDNMRAMMDKLGMEEDQPIESKLVSRAVETAQKRVEGNNFDARKQILQYDDVMREQREIIYKQRMEVLESDNLREIVEKMILSVIERNVQLHTPESEVPEDWDYGAIVNFMKANLLNEDDLTEKDIWGKDPEEIVEIIYDKVIERYNKKEEEFTPEHMREFEKVIMLRTVDRKWMNHIDQMDQLRQGIHLRAYGQNDPLREYRFEGFEMFEAMVASIEEEVAMYVMKAQVQQNLQREKVAEGQAVQPKPTDGDSKAKRQPVRKKETVGRNEPCPCGSGKKYKNCCGQ</sequence>
<evidence type="ECO:0000255" key="1">
    <source>
        <dbReference type="HAMAP-Rule" id="MF_01382"/>
    </source>
</evidence>
<evidence type="ECO:0000256" key="2">
    <source>
        <dbReference type="SAM" id="MobiDB-lite"/>
    </source>
</evidence>
<name>SECA_HALH5</name>
<dbReference type="EC" id="7.4.2.8" evidence="1"/>
<dbReference type="EMBL" id="BA000004">
    <property type="protein sequence ID" value="BAB07325.1"/>
    <property type="molecule type" value="Genomic_DNA"/>
</dbReference>
<dbReference type="PIR" id="F84100">
    <property type="entry name" value="F84100"/>
</dbReference>
<dbReference type="RefSeq" id="WP_010899734.1">
    <property type="nucleotide sequence ID" value="NC_002570.2"/>
</dbReference>
<dbReference type="SMR" id="Q9K6W8"/>
<dbReference type="STRING" id="272558.gene:10729519"/>
<dbReference type="KEGG" id="bha:BH3606"/>
<dbReference type="eggNOG" id="COG0653">
    <property type="taxonomic scope" value="Bacteria"/>
</dbReference>
<dbReference type="HOGENOM" id="CLU_005314_3_0_9"/>
<dbReference type="OrthoDB" id="9805579at2"/>
<dbReference type="Proteomes" id="UP000001258">
    <property type="component" value="Chromosome"/>
</dbReference>
<dbReference type="GO" id="GO:0031522">
    <property type="term" value="C:cell envelope Sec protein transport complex"/>
    <property type="evidence" value="ECO:0007669"/>
    <property type="project" value="TreeGrafter"/>
</dbReference>
<dbReference type="GO" id="GO:0005829">
    <property type="term" value="C:cytosol"/>
    <property type="evidence" value="ECO:0007669"/>
    <property type="project" value="TreeGrafter"/>
</dbReference>
<dbReference type="GO" id="GO:0005886">
    <property type="term" value="C:plasma membrane"/>
    <property type="evidence" value="ECO:0007669"/>
    <property type="project" value="UniProtKB-SubCell"/>
</dbReference>
<dbReference type="GO" id="GO:0005524">
    <property type="term" value="F:ATP binding"/>
    <property type="evidence" value="ECO:0007669"/>
    <property type="project" value="UniProtKB-UniRule"/>
</dbReference>
<dbReference type="GO" id="GO:0046872">
    <property type="term" value="F:metal ion binding"/>
    <property type="evidence" value="ECO:0007669"/>
    <property type="project" value="UniProtKB-KW"/>
</dbReference>
<dbReference type="GO" id="GO:0008564">
    <property type="term" value="F:protein-exporting ATPase activity"/>
    <property type="evidence" value="ECO:0007669"/>
    <property type="project" value="UniProtKB-EC"/>
</dbReference>
<dbReference type="GO" id="GO:0065002">
    <property type="term" value="P:intracellular protein transmembrane transport"/>
    <property type="evidence" value="ECO:0007669"/>
    <property type="project" value="UniProtKB-UniRule"/>
</dbReference>
<dbReference type="GO" id="GO:0017038">
    <property type="term" value="P:protein import"/>
    <property type="evidence" value="ECO:0007669"/>
    <property type="project" value="InterPro"/>
</dbReference>
<dbReference type="GO" id="GO:0006605">
    <property type="term" value="P:protein targeting"/>
    <property type="evidence" value="ECO:0007669"/>
    <property type="project" value="UniProtKB-UniRule"/>
</dbReference>
<dbReference type="GO" id="GO:0043952">
    <property type="term" value="P:protein transport by the Sec complex"/>
    <property type="evidence" value="ECO:0007669"/>
    <property type="project" value="TreeGrafter"/>
</dbReference>
<dbReference type="CDD" id="cd17928">
    <property type="entry name" value="DEXDc_SecA"/>
    <property type="match status" value="1"/>
</dbReference>
<dbReference type="CDD" id="cd18803">
    <property type="entry name" value="SF2_C_secA"/>
    <property type="match status" value="1"/>
</dbReference>
<dbReference type="FunFam" id="1.10.3060.10:FF:000002">
    <property type="entry name" value="Preprotein translocase subunit SecA"/>
    <property type="match status" value="1"/>
</dbReference>
<dbReference type="FunFam" id="3.40.50.300:FF:000429">
    <property type="entry name" value="Preprotein translocase subunit SecA"/>
    <property type="match status" value="1"/>
</dbReference>
<dbReference type="FunFam" id="3.90.1440.10:FF:000001">
    <property type="entry name" value="Preprotein translocase subunit SecA"/>
    <property type="match status" value="1"/>
</dbReference>
<dbReference type="Gene3D" id="1.10.3060.10">
    <property type="entry name" value="Helical scaffold and wing domains of SecA"/>
    <property type="match status" value="1"/>
</dbReference>
<dbReference type="Gene3D" id="3.40.50.300">
    <property type="entry name" value="P-loop containing nucleotide triphosphate hydrolases"/>
    <property type="match status" value="3"/>
</dbReference>
<dbReference type="Gene3D" id="3.90.1440.10">
    <property type="entry name" value="SecA, preprotein cross-linking domain"/>
    <property type="match status" value="1"/>
</dbReference>
<dbReference type="HAMAP" id="MF_01382">
    <property type="entry name" value="SecA"/>
    <property type="match status" value="1"/>
</dbReference>
<dbReference type="InterPro" id="IPR014001">
    <property type="entry name" value="Helicase_ATP-bd"/>
</dbReference>
<dbReference type="InterPro" id="IPR001650">
    <property type="entry name" value="Helicase_C-like"/>
</dbReference>
<dbReference type="InterPro" id="IPR027417">
    <property type="entry name" value="P-loop_NTPase"/>
</dbReference>
<dbReference type="InterPro" id="IPR004027">
    <property type="entry name" value="SEC_C_motif"/>
</dbReference>
<dbReference type="InterPro" id="IPR000185">
    <property type="entry name" value="SecA"/>
</dbReference>
<dbReference type="InterPro" id="IPR020937">
    <property type="entry name" value="SecA_CS"/>
</dbReference>
<dbReference type="InterPro" id="IPR011115">
    <property type="entry name" value="SecA_DEAD"/>
</dbReference>
<dbReference type="InterPro" id="IPR014018">
    <property type="entry name" value="SecA_motor_DEAD"/>
</dbReference>
<dbReference type="InterPro" id="IPR011130">
    <property type="entry name" value="SecA_preprotein_X-link_dom"/>
</dbReference>
<dbReference type="InterPro" id="IPR044722">
    <property type="entry name" value="SecA_SF2_C"/>
</dbReference>
<dbReference type="InterPro" id="IPR011116">
    <property type="entry name" value="SecA_Wing/Scaffold"/>
</dbReference>
<dbReference type="InterPro" id="IPR036266">
    <property type="entry name" value="SecA_Wing/Scaffold_sf"/>
</dbReference>
<dbReference type="InterPro" id="IPR036670">
    <property type="entry name" value="SecA_X-link_sf"/>
</dbReference>
<dbReference type="NCBIfam" id="NF006630">
    <property type="entry name" value="PRK09200.1"/>
    <property type="match status" value="1"/>
</dbReference>
<dbReference type="NCBIfam" id="NF009538">
    <property type="entry name" value="PRK12904.1"/>
    <property type="match status" value="1"/>
</dbReference>
<dbReference type="NCBIfam" id="TIGR00963">
    <property type="entry name" value="secA"/>
    <property type="match status" value="1"/>
</dbReference>
<dbReference type="PANTHER" id="PTHR30612:SF0">
    <property type="entry name" value="CHLOROPLAST PROTEIN-TRANSPORTING ATPASE"/>
    <property type="match status" value="1"/>
</dbReference>
<dbReference type="PANTHER" id="PTHR30612">
    <property type="entry name" value="SECA INNER MEMBRANE COMPONENT OF SEC PROTEIN SECRETION SYSTEM"/>
    <property type="match status" value="1"/>
</dbReference>
<dbReference type="Pfam" id="PF21090">
    <property type="entry name" value="P-loop_SecA"/>
    <property type="match status" value="2"/>
</dbReference>
<dbReference type="Pfam" id="PF02810">
    <property type="entry name" value="SEC-C"/>
    <property type="match status" value="1"/>
</dbReference>
<dbReference type="Pfam" id="PF07517">
    <property type="entry name" value="SecA_DEAD"/>
    <property type="match status" value="1"/>
</dbReference>
<dbReference type="Pfam" id="PF01043">
    <property type="entry name" value="SecA_PP_bind"/>
    <property type="match status" value="1"/>
</dbReference>
<dbReference type="Pfam" id="PF07516">
    <property type="entry name" value="SecA_SW"/>
    <property type="match status" value="1"/>
</dbReference>
<dbReference type="PRINTS" id="PR00906">
    <property type="entry name" value="SECA"/>
</dbReference>
<dbReference type="SMART" id="SM00957">
    <property type="entry name" value="SecA_DEAD"/>
    <property type="match status" value="1"/>
</dbReference>
<dbReference type="SMART" id="SM00958">
    <property type="entry name" value="SecA_PP_bind"/>
    <property type="match status" value="1"/>
</dbReference>
<dbReference type="SUPFAM" id="SSF81886">
    <property type="entry name" value="Helical scaffold and wing domains of SecA"/>
    <property type="match status" value="1"/>
</dbReference>
<dbReference type="SUPFAM" id="SSF52540">
    <property type="entry name" value="P-loop containing nucleoside triphosphate hydrolases"/>
    <property type="match status" value="2"/>
</dbReference>
<dbReference type="SUPFAM" id="SSF81767">
    <property type="entry name" value="Pre-protein crosslinking domain of SecA"/>
    <property type="match status" value="1"/>
</dbReference>
<dbReference type="PROSITE" id="PS01312">
    <property type="entry name" value="SECA"/>
    <property type="match status" value="1"/>
</dbReference>
<dbReference type="PROSITE" id="PS51196">
    <property type="entry name" value="SECA_MOTOR_DEAD"/>
    <property type="match status" value="1"/>
</dbReference>
<reference key="1">
    <citation type="journal article" date="2000" name="Nucleic Acids Res.">
        <title>Complete genome sequence of the alkaliphilic bacterium Bacillus halodurans and genomic sequence comparison with Bacillus subtilis.</title>
        <authorList>
            <person name="Takami H."/>
            <person name="Nakasone K."/>
            <person name="Takaki Y."/>
            <person name="Maeno G."/>
            <person name="Sasaki R."/>
            <person name="Masui N."/>
            <person name="Fuji F."/>
            <person name="Hirama C."/>
            <person name="Nakamura Y."/>
            <person name="Ogasawara N."/>
            <person name="Kuhara S."/>
            <person name="Horikoshi K."/>
        </authorList>
    </citation>
    <scope>NUCLEOTIDE SEQUENCE [LARGE SCALE GENOMIC DNA]</scope>
    <source>
        <strain>ATCC BAA-125 / DSM 18197 / FERM 7344 / JCM 9153 / C-125</strain>
    </source>
</reference>
<proteinExistence type="inferred from homology"/>